<proteinExistence type="inferred from homology"/>
<protein>
    <recommendedName>
        <fullName evidence="1">3-isopropylmalate dehydratase small subunit</fullName>
        <ecNumber evidence="1">4.2.1.33</ecNumber>
    </recommendedName>
    <alternativeName>
        <fullName evidence="1">Alpha-IPM isomerase</fullName>
        <shortName evidence="1">IPMI</shortName>
    </alternativeName>
    <alternativeName>
        <fullName evidence="1">Isopropylmalate isomerase</fullName>
    </alternativeName>
</protein>
<sequence length="201" mass="22429">MDKFTTLEGVAAPLKIINVDTDMIIPKQYLKTIKRTGLGRGLFSEQRYRDDGSENPDFVLNKSAYRNARILVAGDNFGCGSSREHAPWALLDFGIRCVISTSFGDIFYNNCFKNGILPIRVTQADLDKLFDDAERGANATLTIDLANQEIRGPDGGTVKFEIDAFRKHCLLNGLDDIGLTMEKKAAIDSYEDKAKRERAWA</sequence>
<gene>
    <name evidence="1" type="primary">leuD</name>
    <name type="ordered locus">Nwi_2791</name>
</gene>
<name>LEUD_NITWN</name>
<feature type="chain" id="PRO_0000141846" description="3-isopropylmalate dehydratase small subunit">
    <location>
        <begin position="1"/>
        <end position="201"/>
    </location>
</feature>
<dbReference type="EC" id="4.2.1.33" evidence="1"/>
<dbReference type="EMBL" id="CP000115">
    <property type="protein sequence ID" value="ABA06044.1"/>
    <property type="molecule type" value="Genomic_DNA"/>
</dbReference>
<dbReference type="RefSeq" id="WP_011315989.1">
    <property type="nucleotide sequence ID" value="NC_007406.1"/>
</dbReference>
<dbReference type="SMR" id="Q3SNU7"/>
<dbReference type="STRING" id="323098.Nwi_2791"/>
<dbReference type="KEGG" id="nwi:Nwi_2791"/>
<dbReference type="eggNOG" id="COG0066">
    <property type="taxonomic scope" value="Bacteria"/>
</dbReference>
<dbReference type="HOGENOM" id="CLU_081378_0_3_5"/>
<dbReference type="OrthoDB" id="9777465at2"/>
<dbReference type="UniPathway" id="UPA00048">
    <property type="reaction ID" value="UER00071"/>
</dbReference>
<dbReference type="Proteomes" id="UP000002531">
    <property type="component" value="Chromosome"/>
</dbReference>
<dbReference type="GO" id="GO:0009316">
    <property type="term" value="C:3-isopropylmalate dehydratase complex"/>
    <property type="evidence" value="ECO:0007669"/>
    <property type="project" value="InterPro"/>
</dbReference>
<dbReference type="GO" id="GO:0003861">
    <property type="term" value="F:3-isopropylmalate dehydratase activity"/>
    <property type="evidence" value="ECO:0007669"/>
    <property type="project" value="UniProtKB-UniRule"/>
</dbReference>
<dbReference type="GO" id="GO:0009098">
    <property type="term" value="P:L-leucine biosynthetic process"/>
    <property type="evidence" value="ECO:0007669"/>
    <property type="project" value="UniProtKB-UniRule"/>
</dbReference>
<dbReference type="CDD" id="cd01577">
    <property type="entry name" value="IPMI_Swivel"/>
    <property type="match status" value="1"/>
</dbReference>
<dbReference type="FunFam" id="3.20.19.10:FF:000003">
    <property type="entry name" value="3-isopropylmalate dehydratase small subunit"/>
    <property type="match status" value="1"/>
</dbReference>
<dbReference type="Gene3D" id="3.20.19.10">
    <property type="entry name" value="Aconitase, domain 4"/>
    <property type="match status" value="1"/>
</dbReference>
<dbReference type="HAMAP" id="MF_01031">
    <property type="entry name" value="LeuD_type1"/>
    <property type="match status" value="1"/>
</dbReference>
<dbReference type="InterPro" id="IPR004431">
    <property type="entry name" value="3-IsopropMal_deHydase_ssu"/>
</dbReference>
<dbReference type="InterPro" id="IPR015928">
    <property type="entry name" value="Aconitase/3IPM_dehydase_swvl"/>
</dbReference>
<dbReference type="InterPro" id="IPR000573">
    <property type="entry name" value="AconitaseA/IPMdHydase_ssu_swvl"/>
</dbReference>
<dbReference type="InterPro" id="IPR033940">
    <property type="entry name" value="IPMI_Swivel"/>
</dbReference>
<dbReference type="InterPro" id="IPR050075">
    <property type="entry name" value="LeuD"/>
</dbReference>
<dbReference type="NCBIfam" id="TIGR00171">
    <property type="entry name" value="leuD"/>
    <property type="match status" value="1"/>
</dbReference>
<dbReference type="NCBIfam" id="NF002458">
    <property type="entry name" value="PRK01641.1"/>
    <property type="match status" value="1"/>
</dbReference>
<dbReference type="PANTHER" id="PTHR43345:SF5">
    <property type="entry name" value="3-ISOPROPYLMALATE DEHYDRATASE SMALL SUBUNIT"/>
    <property type="match status" value="1"/>
</dbReference>
<dbReference type="PANTHER" id="PTHR43345">
    <property type="entry name" value="3-ISOPROPYLMALATE DEHYDRATASE SMALL SUBUNIT 2-RELATED-RELATED"/>
    <property type="match status" value="1"/>
</dbReference>
<dbReference type="Pfam" id="PF00694">
    <property type="entry name" value="Aconitase_C"/>
    <property type="match status" value="1"/>
</dbReference>
<dbReference type="SUPFAM" id="SSF52016">
    <property type="entry name" value="LeuD/IlvD-like"/>
    <property type="match status" value="1"/>
</dbReference>
<accession>Q3SNU7</accession>
<evidence type="ECO:0000255" key="1">
    <source>
        <dbReference type="HAMAP-Rule" id="MF_01031"/>
    </source>
</evidence>
<reference key="1">
    <citation type="journal article" date="2006" name="Appl. Environ. Microbiol.">
        <title>Genome sequence of the chemolithoautotrophic nitrite-oxidizing bacterium Nitrobacter winogradskyi Nb-255.</title>
        <authorList>
            <person name="Starkenburg S.R."/>
            <person name="Chain P.S.G."/>
            <person name="Sayavedra-Soto L.A."/>
            <person name="Hauser L."/>
            <person name="Land M.L."/>
            <person name="Larimer F.W."/>
            <person name="Malfatti S.A."/>
            <person name="Klotz M.G."/>
            <person name="Bottomley P.J."/>
            <person name="Arp D.J."/>
            <person name="Hickey W.J."/>
        </authorList>
    </citation>
    <scope>NUCLEOTIDE SEQUENCE [LARGE SCALE GENOMIC DNA]</scope>
    <source>
        <strain>ATCC 25391 / DSM 10237 / CIP 104748 / NCIMB 11846 / Nb-255</strain>
    </source>
</reference>
<organism>
    <name type="scientific">Nitrobacter winogradskyi (strain ATCC 25391 / DSM 10237 / CIP 104748 / NCIMB 11846 / Nb-255)</name>
    <dbReference type="NCBI Taxonomy" id="323098"/>
    <lineage>
        <taxon>Bacteria</taxon>
        <taxon>Pseudomonadati</taxon>
        <taxon>Pseudomonadota</taxon>
        <taxon>Alphaproteobacteria</taxon>
        <taxon>Hyphomicrobiales</taxon>
        <taxon>Nitrobacteraceae</taxon>
        <taxon>Nitrobacter</taxon>
    </lineage>
</organism>
<comment type="function">
    <text evidence="1">Catalyzes the isomerization between 2-isopropylmalate and 3-isopropylmalate, via the formation of 2-isopropylmaleate.</text>
</comment>
<comment type="catalytic activity">
    <reaction evidence="1">
        <text>(2R,3S)-3-isopropylmalate = (2S)-2-isopropylmalate</text>
        <dbReference type="Rhea" id="RHEA:32287"/>
        <dbReference type="ChEBI" id="CHEBI:1178"/>
        <dbReference type="ChEBI" id="CHEBI:35121"/>
        <dbReference type="EC" id="4.2.1.33"/>
    </reaction>
</comment>
<comment type="pathway">
    <text evidence="1">Amino-acid biosynthesis; L-leucine biosynthesis; L-leucine from 3-methyl-2-oxobutanoate: step 2/4.</text>
</comment>
<comment type="subunit">
    <text evidence="1">Heterodimer of LeuC and LeuD.</text>
</comment>
<comment type="similarity">
    <text evidence="1">Belongs to the LeuD family. LeuD type 1 subfamily.</text>
</comment>
<keyword id="KW-0028">Amino-acid biosynthesis</keyword>
<keyword id="KW-0100">Branched-chain amino acid biosynthesis</keyword>
<keyword id="KW-0432">Leucine biosynthesis</keyword>
<keyword id="KW-0456">Lyase</keyword>
<keyword id="KW-1185">Reference proteome</keyword>